<gene>
    <name evidence="1" type="primary">thyA</name>
    <name type="ordered locus">gbs1385</name>
</gene>
<dbReference type="EC" id="2.1.1.45" evidence="1"/>
<dbReference type="EMBL" id="AL766850">
    <property type="protein sequence ID" value="CAD47044.1"/>
    <property type="molecule type" value="Genomic_DNA"/>
</dbReference>
<dbReference type="RefSeq" id="WP_000158597.1">
    <property type="nucleotide sequence ID" value="NC_004368.1"/>
</dbReference>
<dbReference type="SMR" id="Q8E4L6"/>
<dbReference type="KEGG" id="san:ThyA"/>
<dbReference type="eggNOG" id="COG0207">
    <property type="taxonomic scope" value="Bacteria"/>
</dbReference>
<dbReference type="HOGENOM" id="CLU_021669_0_0_9"/>
<dbReference type="UniPathway" id="UPA00575"/>
<dbReference type="Proteomes" id="UP000000823">
    <property type="component" value="Chromosome"/>
</dbReference>
<dbReference type="GO" id="GO:0005829">
    <property type="term" value="C:cytosol"/>
    <property type="evidence" value="ECO:0007669"/>
    <property type="project" value="TreeGrafter"/>
</dbReference>
<dbReference type="GO" id="GO:0004799">
    <property type="term" value="F:thymidylate synthase activity"/>
    <property type="evidence" value="ECO:0007669"/>
    <property type="project" value="UniProtKB-UniRule"/>
</dbReference>
<dbReference type="GO" id="GO:0006231">
    <property type="term" value="P:dTMP biosynthetic process"/>
    <property type="evidence" value="ECO:0007669"/>
    <property type="project" value="UniProtKB-UniRule"/>
</dbReference>
<dbReference type="GO" id="GO:0006235">
    <property type="term" value="P:dTTP biosynthetic process"/>
    <property type="evidence" value="ECO:0007669"/>
    <property type="project" value="UniProtKB-UniRule"/>
</dbReference>
<dbReference type="GO" id="GO:0032259">
    <property type="term" value="P:methylation"/>
    <property type="evidence" value="ECO:0007669"/>
    <property type="project" value="UniProtKB-KW"/>
</dbReference>
<dbReference type="CDD" id="cd00351">
    <property type="entry name" value="TS_Pyrimidine_HMase"/>
    <property type="match status" value="1"/>
</dbReference>
<dbReference type="Gene3D" id="3.30.572.10">
    <property type="entry name" value="Thymidylate synthase/dCMP hydroxymethylase domain"/>
    <property type="match status" value="1"/>
</dbReference>
<dbReference type="HAMAP" id="MF_00008">
    <property type="entry name" value="Thymidy_synth_bact"/>
    <property type="match status" value="1"/>
</dbReference>
<dbReference type="InterPro" id="IPR045097">
    <property type="entry name" value="Thymidate_synth/dCMP_Mease"/>
</dbReference>
<dbReference type="InterPro" id="IPR023451">
    <property type="entry name" value="Thymidate_synth/dCMP_Mease_dom"/>
</dbReference>
<dbReference type="InterPro" id="IPR036926">
    <property type="entry name" value="Thymidate_synth/dCMP_Mease_sf"/>
</dbReference>
<dbReference type="InterPro" id="IPR000398">
    <property type="entry name" value="Thymidylate_synthase"/>
</dbReference>
<dbReference type="InterPro" id="IPR020940">
    <property type="entry name" value="Thymidylate_synthase_AS"/>
</dbReference>
<dbReference type="NCBIfam" id="NF002495">
    <property type="entry name" value="PRK01827.1-1"/>
    <property type="match status" value="1"/>
</dbReference>
<dbReference type="PANTHER" id="PTHR11548">
    <property type="entry name" value="THYMIDYLATE SYNTHASE 1"/>
    <property type="match status" value="1"/>
</dbReference>
<dbReference type="PANTHER" id="PTHR11548:SF1">
    <property type="entry name" value="THYMIDYLATE SYNTHASE 1"/>
    <property type="match status" value="1"/>
</dbReference>
<dbReference type="Pfam" id="PF00303">
    <property type="entry name" value="Thymidylat_synt"/>
    <property type="match status" value="1"/>
</dbReference>
<dbReference type="PRINTS" id="PR00108">
    <property type="entry name" value="THYMDSNTHASE"/>
</dbReference>
<dbReference type="SUPFAM" id="SSF55831">
    <property type="entry name" value="Thymidylate synthase/dCMP hydroxymethylase"/>
    <property type="match status" value="1"/>
</dbReference>
<dbReference type="PROSITE" id="PS00091">
    <property type="entry name" value="THYMIDYLATE_SYNTHASE"/>
    <property type="match status" value="1"/>
</dbReference>
<proteinExistence type="inferred from homology"/>
<protein>
    <recommendedName>
        <fullName evidence="1">Thymidylate synthase</fullName>
        <shortName evidence="1">TS</shortName>
        <shortName evidence="1">TSase</shortName>
        <ecNumber evidence="1">2.1.1.45</ecNumber>
    </recommendedName>
</protein>
<reference key="1">
    <citation type="journal article" date="2002" name="Mol. Microbiol.">
        <title>Genome sequence of Streptococcus agalactiae, a pathogen causing invasive neonatal disease.</title>
        <authorList>
            <person name="Glaser P."/>
            <person name="Rusniok C."/>
            <person name="Buchrieser C."/>
            <person name="Chevalier F."/>
            <person name="Frangeul L."/>
            <person name="Msadek T."/>
            <person name="Zouine M."/>
            <person name="Couve E."/>
            <person name="Lalioui L."/>
            <person name="Poyart C."/>
            <person name="Trieu-Cuot P."/>
            <person name="Kunst F."/>
        </authorList>
    </citation>
    <scope>NUCLEOTIDE SEQUENCE [LARGE SCALE GENOMIC DNA]</scope>
    <source>
        <strain>NEM316</strain>
    </source>
</reference>
<name>TYSY_STRA3</name>
<evidence type="ECO:0000255" key="1">
    <source>
        <dbReference type="HAMAP-Rule" id="MF_00008"/>
    </source>
</evidence>
<keyword id="KW-0963">Cytoplasm</keyword>
<keyword id="KW-0489">Methyltransferase</keyword>
<keyword id="KW-0545">Nucleotide biosynthesis</keyword>
<keyword id="KW-0808">Transferase</keyword>
<accession>Q8E4L6</accession>
<comment type="function">
    <text evidence="1">Catalyzes the reductive methylation of 2'-deoxyuridine-5'-monophosphate (dUMP) to 2'-deoxythymidine-5'-monophosphate (dTMP) while utilizing 5,10-methylenetetrahydrofolate (mTHF) as the methyl donor and reductant in the reaction, yielding dihydrofolate (DHF) as a by-product. This enzymatic reaction provides an intracellular de novo source of dTMP, an essential precursor for DNA biosynthesis.</text>
</comment>
<comment type="catalytic activity">
    <reaction evidence="1">
        <text>dUMP + (6R)-5,10-methylene-5,6,7,8-tetrahydrofolate = 7,8-dihydrofolate + dTMP</text>
        <dbReference type="Rhea" id="RHEA:12104"/>
        <dbReference type="ChEBI" id="CHEBI:15636"/>
        <dbReference type="ChEBI" id="CHEBI:57451"/>
        <dbReference type="ChEBI" id="CHEBI:63528"/>
        <dbReference type="ChEBI" id="CHEBI:246422"/>
        <dbReference type="EC" id="2.1.1.45"/>
    </reaction>
</comment>
<comment type="pathway">
    <text evidence="1">Pyrimidine metabolism; dTTP biosynthesis.</text>
</comment>
<comment type="subunit">
    <text evidence="1">Homodimer.</text>
</comment>
<comment type="subcellular location">
    <subcellularLocation>
        <location evidence="1">Cytoplasm</location>
    </subcellularLocation>
</comment>
<comment type="similarity">
    <text evidence="1">Belongs to the thymidylate synthase family. Bacterial-type ThyA subfamily.</text>
</comment>
<sequence>MTKADLLFKDNITKIMSEGVFSEQARPRYKNGEMANSKYITGAFAEYDLSKGEFPITTLRPIPIKSAIKEIFWIYQDQTNDLVVLNDKYGVTYWNDWEVGHTGTIGQRYGAVVKKHNIISKLLKQLEDNPWNRRNVISLWDYEAFEETEGLLPCAFQTMFDVRRVNGELYLDATLTQRSNDMLVAHHINAMQYVALQMMIAKHFGWRVGKFFYFINNLHIYDNQFEQAQELLKRQPSECNPKLVLNVPDGTDFFDIKPDDFALVDYDPIKPQLRFDLAI</sequence>
<feature type="chain" id="PRO_0000141027" description="Thymidylate synthase">
    <location>
        <begin position="1"/>
        <end position="279"/>
    </location>
</feature>
<feature type="active site" description="Nucleophile" evidence="1">
    <location>
        <position position="154"/>
    </location>
</feature>
<feature type="binding site" evidence="1">
    <location>
        <begin position="133"/>
        <end position="134"/>
    </location>
    <ligand>
        <name>dUMP</name>
        <dbReference type="ChEBI" id="CHEBI:246422"/>
        <note>ligand shared between dimeric partners</note>
    </ligand>
</feature>
<feature type="binding site" description="in other chain" evidence="1">
    <location>
        <begin position="178"/>
        <end position="181"/>
    </location>
    <ligand>
        <name>dUMP</name>
        <dbReference type="ChEBI" id="CHEBI:246422"/>
        <note>ligand shared between dimeric partners</note>
    </ligand>
</feature>
<feature type="binding site" evidence="1">
    <location>
        <position position="181"/>
    </location>
    <ligand>
        <name>(6R)-5,10-methylene-5,6,7,8-tetrahydrofolate</name>
        <dbReference type="ChEBI" id="CHEBI:15636"/>
    </ligand>
</feature>
<feature type="binding site" description="in other chain" evidence="1">
    <location>
        <position position="189"/>
    </location>
    <ligand>
        <name>dUMP</name>
        <dbReference type="ChEBI" id="CHEBI:246422"/>
        <note>ligand shared between dimeric partners</note>
    </ligand>
</feature>
<feature type="binding site" description="in other chain" evidence="1">
    <location>
        <begin position="219"/>
        <end position="221"/>
    </location>
    <ligand>
        <name>dUMP</name>
        <dbReference type="ChEBI" id="CHEBI:246422"/>
        <note>ligand shared between dimeric partners</note>
    </ligand>
</feature>
<feature type="binding site" evidence="1">
    <location>
        <position position="278"/>
    </location>
    <ligand>
        <name>(6R)-5,10-methylene-5,6,7,8-tetrahydrofolate</name>
        <dbReference type="ChEBI" id="CHEBI:15636"/>
    </ligand>
</feature>
<organism>
    <name type="scientific">Streptococcus agalactiae serotype III (strain NEM316)</name>
    <dbReference type="NCBI Taxonomy" id="211110"/>
    <lineage>
        <taxon>Bacteria</taxon>
        <taxon>Bacillati</taxon>
        <taxon>Bacillota</taxon>
        <taxon>Bacilli</taxon>
        <taxon>Lactobacillales</taxon>
        <taxon>Streptococcaceae</taxon>
        <taxon>Streptococcus</taxon>
    </lineage>
</organism>